<accession>A0RJN9</accession>
<keyword id="KW-0067">ATP-binding</keyword>
<keyword id="KW-0963">Cytoplasm</keyword>
<keyword id="KW-0547">Nucleotide-binding</keyword>
<keyword id="KW-0694">RNA-binding</keyword>
<keyword id="KW-0784">Thiamine biosynthesis</keyword>
<keyword id="KW-0808">Transferase</keyword>
<keyword id="KW-0820">tRNA-binding</keyword>
<comment type="function">
    <text evidence="1">Catalyzes the ATP-dependent transfer of a sulfur to tRNA to produce 4-thiouridine in position 8 of tRNAs, which functions as a near-UV photosensor. Also catalyzes the transfer of sulfur to the sulfur carrier protein ThiS, forming ThiS-thiocarboxylate. This is a step in the synthesis of thiazole, in the thiamine biosynthesis pathway. The sulfur is donated as persulfide by IscS.</text>
</comment>
<comment type="catalytic activity">
    <reaction evidence="1">
        <text>[ThiI sulfur-carrier protein]-S-sulfanyl-L-cysteine + a uridine in tRNA + 2 reduced [2Fe-2S]-[ferredoxin] + ATP + H(+) = [ThiI sulfur-carrier protein]-L-cysteine + a 4-thiouridine in tRNA + 2 oxidized [2Fe-2S]-[ferredoxin] + AMP + diphosphate</text>
        <dbReference type="Rhea" id="RHEA:24176"/>
        <dbReference type="Rhea" id="RHEA-COMP:10000"/>
        <dbReference type="Rhea" id="RHEA-COMP:10001"/>
        <dbReference type="Rhea" id="RHEA-COMP:13337"/>
        <dbReference type="Rhea" id="RHEA-COMP:13338"/>
        <dbReference type="Rhea" id="RHEA-COMP:13339"/>
        <dbReference type="Rhea" id="RHEA-COMP:13340"/>
        <dbReference type="ChEBI" id="CHEBI:15378"/>
        <dbReference type="ChEBI" id="CHEBI:29950"/>
        <dbReference type="ChEBI" id="CHEBI:30616"/>
        <dbReference type="ChEBI" id="CHEBI:33019"/>
        <dbReference type="ChEBI" id="CHEBI:33737"/>
        <dbReference type="ChEBI" id="CHEBI:33738"/>
        <dbReference type="ChEBI" id="CHEBI:61963"/>
        <dbReference type="ChEBI" id="CHEBI:65315"/>
        <dbReference type="ChEBI" id="CHEBI:136798"/>
        <dbReference type="ChEBI" id="CHEBI:456215"/>
        <dbReference type="EC" id="2.8.1.4"/>
    </reaction>
</comment>
<comment type="catalytic activity">
    <reaction evidence="1">
        <text>[ThiS sulfur-carrier protein]-C-terminal Gly-Gly-AMP + S-sulfanyl-L-cysteinyl-[cysteine desulfurase] + AH2 = [ThiS sulfur-carrier protein]-C-terminal-Gly-aminoethanethioate + L-cysteinyl-[cysteine desulfurase] + A + AMP + 2 H(+)</text>
        <dbReference type="Rhea" id="RHEA:43340"/>
        <dbReference type="Rhea" id="RHEA-COMP:12157"/>
        <dbReference type="Rhea" id="RHEA-COMP:12158"/>
        <dbReference type="Rhea" id="RHEA-COMP:12910"/>
        <dbReference type="Rhea" id="RHEA-COMP:19908"/>
        <dbReference type="ChEBI" id="CHEBI:13193"/>
        <dbReference type="ChEBI" id="CHEBI:15378"/>
        <dbReference type="ChEBI" id="CHEBI:17499"/>
        <dbReference type="ChEBI" id="CHEBI:29950"/>
        <dbReference type="ChEBI" id="CHEBI:61963"/>
        <dbReference type="ChEBI" id="CHEBI:90618"/>
        <dbReference type="ChEBI" id="CHEBI:232372"/>
        <dbReference type="ChEBI" id="CHEBI:456215"/>
    </reaction>
</comment>
<comment type="pathway">
    <text evidence="1">Cofactor biosynthesis; thiamine diphosphate biosynthesis.</text>
</comment>
<comment type="subcellular location">
    <subcellularLocation>
        <location evidence="1">Cytoplasm</location>
    </subcellularLocation>
</comment>
<comment type="similarity">
    <text evidence="1">Belongs to the ThiI family.</text>
</comment>
<name>THII_BACAH</name>
<evidence type="ECO:0000255" key="1">
    <source>
        <dbReference type="HAMAP-Rule" id="MF_00021"/>
    </source>
</evidence>
<dbReference type="EC" id="2.8.1.4" evidence="1"/>
<dbReference type="EMBL" id="CP000485">
    <property type="protein sequence ID" value="ABK87432.1"/>
    <property type="molecule type" value="Genomic_DNA"/>
</dbReference>
<dbReference type="RefSeq" id="WP_000989283.1">
    <property type="nucleotide sequence ID" value="NC_008600.1"/>
</dbReference>
<dbReference type="SMR" id="A0RJN9"/>
<dbReference type="GeneID" id="45024520"/>
<dbReference type="KEGG" id="btl:BALH_4225"/>
<dbReference type="HOGENOM" id="CLU_037952_4_0_9"/>
<dbReference type="UniPathway" id="UPA00060"/>
<dbReference type="GO" id="GO:0005829">
    <property type="term" value="C:cytosol"/>
    <property type="evidence" value="ECO:0007669"/>
    <property type="project" value="TreeGrafter"/>
</dbReference>
<dbReference type="GO" id="GO:0005524">
    <property type="term" value="F:ATP binding"/>
    <property type="evidence" value="ECO:0007669"/>
    <property type="project" value="UniProtKB-UniRule"/>
</dbReference>
<dbReference type="GO" id="GO:0004810">
    <property type="term" value="F:CCA tRNA nucleotidyltransferase activity"/>
    <property type="evidence" value="ECO:0007669"/>
    <property type="project" value="InterPro"/>
</dbReference>
<dbReference type="GO" id="GO:0000049">
    <property type="term" value="F:tRNA binding"/>
    <property type="evidence" value="ECO:0007669"/>
    <property type="project" value="UniProtKB-UniRule"/>
</dbReference>
<dbReference type="GO" id="GO:0140741">
    <property type="term" value="F:tRNA-uracil-4 sulfurtransferase activity"/>
    <property type="evidence" value="ECO:0007669"/>
    <property type="project" value="UniProtKB-EC"/>
</dbReference>
<dbReference type="GO" id="GO:0009228">
    <property type="term" value="P:thiamine biosynthetic process"/>
    <property type="evidence" value="ECO:0007669"/>
    <property type="project" value="UniProtKB-KW"/>
</dbReference>
<dbReference type="GO" id="GO:0009229">
    <property type="term" value="P:thiamine diphosphate biosynthetic process"/>
    <property type="evidence" value="ECO:0007669"/>
    <property type="project" value="UniProtKB-UniRule"/>
</dbReference>
<dbReference type="GO" id="GO:0052837">
    <property type="term" value="P:thiazole biosynthetic process"/>
    <property type="evidence" value="ECO:0007669"/>
    <property type="project" value="TreeGrafter"/>
</dbReference>
<dbReference type="GO" id="GO:0002937">
    <property type="term" value="P:tRNA 4-thiouridine biosynthesis"/>
    <property type="evidence" value="ECO:0007669"/>
    <property type="project" value="TreeGrafter"/>
</dbReference>
<dbReference type="CDD" id="cd01712">
    <property type="entry name" value="PPase_ThiI"/>
    <property type="match status" value="1"/>
</dbReference>
<dbReference type="CDD" id="cd11716">
    <property type="entry name" value="THUMP_ThiI"/>
    <property type="match status" value="1"/>
</dbReference>
<dbReference type="FunFam" id="3.30.2130.30:FF:000003">
    <property type="entry name" value="Probable tRNA sulfurtransferase"/>
    <property type="match status" value="1"/>
</dbReference>
<dbReference type="FunFam" id="3.40.50.620:FF:000053">
    <property type="entry name" value="Probable tRNA sulfurtransferase"/>
    <property type="match status" value="1"/>
</dbReference>
<dbReference type="Gene3D" id="3.30.2130.30">
    <property type="match status" value="1"/>
</dbReference>
<dbReference type="Gene3D" id="3.40.50.620">
    <property type="entry name" value="HUPs"/>
    <property type="match status" value="1"/>
</dbReference>
<dbReference type="HAMAP" id="MF_00021">
    <property type="entry name" value="ThiI"/>
    <property type="match status" value="1"/>
</dbReference>
<dbReference type="InterPro" id="IPR014729">
    <property type="entry name" value="Rossmann-like_a/b/a_fold"/>
</dbReference>
<dbReference type="InterPro" id="IPR020536">
    <property type="entry name" value="ThiI_AANH"/>
</dbReference>
<dbReference type="InterPro" id="IPR054173">
    <property type="entry name" value="ThiI_fer"/>
</dbReference>
<dbReference type="InterPro" id="IPR049961">
    <property type="entry name" value="ThiI_N"/>
</dbReference>
<dbReference type="InterPro" id="IPR004114">
    <property type="entry name" value="THUMP_dom"/>
</dbReference>
<dbReference type="InterPro" id="IPR049962">
    <property type="entry name" value="THUMP_ThiI"/>
</dbReference>
<dbReference type="InterPro" id="IPR003720">
    <property type="entry name" value="tRNA_STrfase"/>
</dbReference>
<dbReference type="InterPro" id="IPR050102">
    <property type="entry name" value="tRNA_sulfurtransferase_ThiI"/>
</dbReference>
<dbReference type="NCBIfam" id="TIGR00342">
    <property type="entry name" value="tRNA uracil 4-sulfurtransferase ThiI"/>
    <property type="match status" value="1"/>
</dbReference>
<dbReference type="PANTHER" id="PTHR43209">
    <property type="entry name" value="TRNA SULFURTRANSFERASE"/>
    <property type="match status" value="1"/>
</dbReference>
<dbReference type="PANTHER" id="PTHR43209:SF1">
    <property type="entry name" value="TRNA SULFURTRANSFERASE"/>
    <property type="match status" value="1"/>
</dbReference>
<dbReference type="Pfam" id="PF02568">
    <property type="entry name" value="ThiI"/>
    <property type="match status" value="1"/>
</dbReference>
<dbReference type="Pfam" id="PF22025">
    <property type="entry name" value="ThiI_fer"/>
    <property type="match status" value="1"/>
</dbReference>
<dbReference type="Pfam" id="PF02926">
    <property type="entry name" value="THUMP"/>
    <property type="match status" value="1"/>
</dbReference>
<dbReference type="SMART" id="SM00981">
    <property type="entry name" value="THUMP"/>
    <property type="match status" value="1"/>
</dbReference>
<dbReference type="SUPFAM" id="SSF52402">
    <property type="entry name" value="Adenine nucleotide alpha hydrolases-like"/>
    <property type="match status" value="1"/>
</dbReference>
<dbReference type="SUPFAM" id="SSF143437">
    <property type="entry name" value="THUMP domain-like"/>
    <property type="match status" value="1"/>
</dbReference>
<dbReference type="PROSITE" id="PS51165">
    <property type="entry name" value="THUMP"/>
    <property type="match status" value="1"/>
</dbReference>
<reference key="1">
    <citation type="journal article" date="2007" name="J. Bacteriol.">
        <title>The complete genome sequence of Bacillus thuringiensis Al Hakam.</title>
        <authorList>
            <person name="Challacombe J.F."/>
            <person name="Altherr M.R."/>
            <person name="Xie G."/>
            <person name="Bhotika S.S."/>
            <person name="Brown N."/>
            <person name="Bruce D."/>
            <person name="Campbell C.S."/>
            <person name="Campbell M.L."/>
            <person name="Chen J."/>
            <person name="Chertkov O."/>
            <person name="Cleland C."/>
            <person name="Dimitrijevic M."/>
            <person name="Doggett N.A."/>
            <person name="Fawcett J.J."/>
            <person name="Glavina T."/>
            <person name="Goodwin L.A."/>
            <person name="Green L.D."/>
            <person name="Han C.S."/>
            <person name="Hill K.K."/>
            <person name="Hitchcock P."/>
            <person name="Jackson P.J."/>
            <person name="Keim P."/>
            <person name="Kewalramani A.R."/>
            <person name="Longmire J."/>
            <person name="Lucas S."/>
            <person name="Malfatti S."/>
            <person name="Martinez D."/>
            <person name="McMurry K."/>
            <person name="Meincke L.J."/>
            <person name="Misra M."/>
            <person name="Moseman B.L."/>
            <person name="Mundt M."/>
            <person name="Munk A.C."/>
            <person name="Okinaka R.T."/>
            <person name="Parson-Quintana B."/>
            <person name="Reilly L.P."/>
            <person name="Richardson P."/>
            <person name="Robinson D.L."/>
            <person name="Saunders E."/>
            <person name="Tapia R."/>
            <person name="Tesmer J.G."/>
            <person name="Thayer N."/>
            <person name="Thompson L.S."/>
            <person name="Tice H."/>
            <person name="Ticknor L.O."/>
            <person name="Wills P.L."/>
            <person name="Gilna P."/>
            <person name="Brettin T.S."/>
        </authorList>
    </citation>
    <scope>NUCLEOTIDE SEQUENCE [LARGE SCALE GENOMIC DNA]</scope>
    <source>
        <strain>Al Hakam</strain>
    </source>
</reference>
<feature type="chain" id="PRO_1000074203" description="Probable tRNA sulfurtransferase">
    <location>
        <begin position="1"/>
        <end position="404"/>
    </location>
</feature>
<feature type="domain" description="THUMP" evidence="1">
    <location>
        <begin position="61"/>
        <end position="166"/>
    </location>
</feature>
<feature type="binding site" evidence="1">
    <location>
        <begin position="184"/>
        <end position="185"/>
    </location>
    <ligand>
        <name>ATP</name>
        <dbReference type="ChEBI" id="CHEBI:30616"/>
    </ligand>
</feature>
<feature type="binding site" evidence="1">
    <location>
        <begin position="209"/>
        <end position="210"/>
    </location>
    <ligand>
        <name>ATP</name>
        <dbReference type="ChEBI" id="CHEBI:30616"/>
    </ligand>
</feature>
<feature type="binding site" evidence="1">
    <location>
        <position position="266"/>
    </location>
    <ligand>
        <name>ATP</name>
        <dbReference type="ChEBI" id="CHEBI:30616"/>
    </ligand>
</feature>
<feature type="binding site" evidence="1">
    <location>
        <position position="288"/>
    </location>
    <ligand>
        <name>ATP</name>
        <dbReference type="ChEBI" id="CHEBI:30616"/>
    </ligand>
</feature>
<feature type="binding site" evidence="1">
    <location>
        <position position="297"/>
    </location>
    <ligand>
        <name>ATP</name>
        <dbReference type="ChEBI" id="CHEBI:30616"/>
    </ligand>
</feature>
<proteinExistence type="inferred from homology"/>
<organism>
    <name type="scientific">Bacillus thuringiensis (strain Al Hakam)</name>
    <dbReference type="NCBI Taxonomy" id="412694"/>
    <lineage>
        <taxon>Bacteria</taxon>
        <taxon>Bacillati</taxon>
        <taxon>Bacillota</taxon>
        <taxon>Bacilli</taxon>
        <taxon>Bacillales</taxon>
        <taxon>Bacillaceae</taxon>
        <taxon>Bacillus</taxon>
        <taxon>Bacillus cereus group</taxon>
    </lineage>
</organism>
<protein>
    <recommendedName>
        <fullName evidence="1">Probable tRNA sulfurtransferase</fullName>
        <ecNumber evidence="1">2.8.1.4</ecNumber>
    </recommendedName>
    <alternativeName>
        <fullName evidence="1">Sulfur carrier protein ThiS sulfurtransferase</fullName>
    </alternativeName>
    <alternativeName>
        <fullName evidence="1">Thiamine biosynthesis protein ThiI</fullName>
    </alternativeName>
    <alternativeName>
        <fullName evidence="1">tRNA 4-thiouridine synthase</fullName>
    </alternativeName>
</protein>
<gene>
    <name evidence="1" type="primary">thiI</name>
    <name type="ordered locus">BALH_4225</name>
</gene>
<sequence length="404" mass="45842">MMTYEYILVRYGEMTTKGKNRSKFVSTLKDNVKFKLKKFPNIKIDATHDRMYIQLNGEDHEAVSERLKDVFGIHKFNLAMKVPSELEDIKKGALAAFLQVKGDVKTFKITVHRSYKHFPMRTMELLPEIGGHILENTEDITVDVHNPDVNVRVEIRSGYSYIMCDERMGAGGLPVGVGGKVMVLLSGGIDSPVAAYLTMKRGVSVEAVHFHSPPFTSERAKQKVIDLAQELTKYCKRVTLHLVPFTEVQKTINKEIPSSYSMTVMRRMMMRITERIAEERNALAITTGESLGQVASQTLDSMHTINEVTNYPVIRPLITMDKLEIIKIAEEIGTYDISIRPYEDCCTVFTPASPATKPKREKANRFEAKYDFTPLIDEAVANKETMVLQTVEVVAEEEKFEELF</sequence>